<gene>
    <name evidence="1" type="primary">leuC</name>
    <name type="ordered locus">LHK_00701</name>
</gene>
<comment type="function">
    <text evidence="1">Catalyzes the isomerization between 2-isopropylmalate and 3-isopropylmalate, via the formation of 2-isopropylmaleate.</text>
</comment>
<comment type="catalytic activity">
    <reaction evidence="1">
        <text>(2R,3S)-3-isopropylmalate = (2S)-2-isopropylmalate</text>
        <dbReference type="Rhea" id="RHEA:32287"/>
        <dbReference type="ChEBI" id="CHEBI:1178"/>
        <dbReference type="ChEBI" id="CHEBI:35121"/>
        <dbReference type="EC" id="4.2.1.33"/>
    </reaction>
</comment>
<comment type="cofactor">
    <cofactor evidence="1">
        <name>[4Fe-4S] cluster</name>
        <dbReference type="ChEBI" id="CHEBI:49883"/>
    </cofactor>
    <text evidence="1">Binds 1 [4Fe-4S] cluster per subunit.</text>
</comment>
<comment type="pathway">
    <text evidence="1">Amino-acid biosynthesis; L-leucine biosynthesis; L-leucine from 3-methyl-2-oxobutanoate: step 2/4.</text>
</comment>
<comment type="subunit">
    <text evidence="1">Heterodimer of LeuC and LeuD.</text>
</comment>
<comment type="similarity">
    <text evidence="1">Belongs to the aconitase/IPM isomerase family. LeuC type 1 subfamily.</text>
</comment>
<feature type="chain" id="PRO_1000149366" description="3-isopropylmalate dehydratase large subunit">
    <location>
        <begin position="1"/>
        <end position="472"/>
    </location>
</feature>
<feature type="binding site" evidence="1">
    <location>
        <position position="352"/>
    </location>
    <ligand>
        <name>[4Fe-4S] cluster</name>
        <dbReference type="ChEBI" id="CHEBI:49883"/>
    </ligand>
</feature>
<feature type="binding site" evidence="1">
    <location>
        <position position="413"/>
    </location>
    <ligand>
        <name>[4Fe-4S] cluster</name>
        <dbReference type="ChEBI" id="CHEBI:49883"/>
    </ligand>
</feature>
<feature type="binding site" evidence="1">
    <location>
        <position position="416"/>
    </location>
    <ligand>
        <name>[4Fe-4S] cluster</name>
        <dbReference type="ChEBI" id="CHEBI:49883"/>
    </ligand>
</feature>
<reference key="1">
    <citation type="journal article" date="2009" name="PLoS Genet.">
        <title>The complete genome and proteome of Laribacter hongkongensis reveal potential mechanisms for adaptations to different temperatures and habitats.</title>
        <authorList>
            <person name="Woo P.C.Y."/>
            <person name="Lau S.K.P."/>
            <person name="Tse H."/>
            <person name="Teng J.L.L."/>
            <person name="Curreem S.O."/>
            <person name="Tsang A.K.L."/>
            <person name="Fan R.Y.Y."/>
            <person name="Wong G.K.M."/>
            <person name="Huang Y."/>
            <person name="Loman N.J."/>
            <person name="Snyder L.A.S."/>
            <person name="Cai J.J."/>
            <person name="Huang J.-D."/>
            <person name="Mak W."/>
            <person name="Pallen M.J."/>
            <person name="Lok S."/>
            <person name="Yuen K.-Y."/>
        </authorList>
    </citation>
    <scope>NUCLEOTIDE SEQUENCE [LARGE SCALE GENOMIC DNA]</scope>
    <source>
        <strain>HLHK9</strain>
    </source>
</reference>
<protein>
    <recommendedName>
        <fullName evidence="1">3-isopropylmalate dehydratase large subunit</fullName>
        <ecNumber evidence="1">4.2.1.33</ecNumber>
    </recommendedName>
    <alternativeName>
        <fullName evidence="1">Alpha-IPM isomerase</fullName>
        <shortName evidence="1">IPMI</shortName>
    </alternativeName>
    <alternativeName>
        <fullName evidence="1">Isopropylmalate isomerase</fullName>
    </alternativeName>
</protein>
<name>LEUC_LARHH</name>
<dbReference type="EC" id="4.2.1.33" evidence="1"/>
<dbReference type="EMBL" id="CP001154">
    <property type="protein sequence ID" value="ACO73694.1"/>
    <property type="molecule type" value="Genomic_DNA"/>
</dbReference>
<dbReference type="RefSeq" id="WP_012696186.1">
    <property type="nucleotide sequence ID" value="NC_012559.1"/>
</dbReference>
<dbReference type="SMR" id="C1DD59"/>
<dbReference type="STRING" id="557598.LHK_00701"/>
<dbReference type="GeneID" id="75109026"/>
<dbReference type="KEGG" id="lhk:LHK_00701"/>
<dbReference type="eggNOG" id="COG0065">
    <property type="taxonomic scope" value="Bacteria"/>
</dbReference>
<dbReference type="HOGENOM" id="CLU_006714_3_4_4"/>
<dbReference type="UniPathway" id="UPA00048">
    <property type="reaction ID" value="UER00071"/>
</dbReference>
<dbReference type="Proteomes" id="UP000002010">
    <property type="component" value="Chromosome"/>
</dbReference>
<dbReference type="GO" id="GO:0003861">
    <property type="term" value="F:3-isopropylmalate dehydratase activity"/>
    <property type="evidence" value="ECO:0007669"/>
    <property type="project" value="UniProtKB-UniRule"/>
</dbReference>
<dbReference type="GO" id="GO:0051539">
    <property type="term" value="F:4 iron, 4 sulfur cluster binding"/>
    <property type="evidence" value="ECO:0007669"/>
    <property type="project" value="UniProtKB-KW"/>
</dbReference>
<dbReference type="GO" id="GO:0046872">
    <property type="term" value="F:metal ion binding"/>
    <property type="evidence" value="ECO:0007669"/>
    <property type="project" value="UniProtKB-KW"/>
</dbReference>
<dbReference type="GO" id="GO:0009098">
    <property type="term" value="P:L-leucine biosynthetic process"/>
    <property type="evidence" value="ECO:0007669"/>
    <property type="project" value="UniProtKB-UniRule"/>
</dbReference>
<dbReference type="CDD" id="cd01583">
    <property type="entry name" value="IPMI"/>
    <property type="match status" value="1"/>
</dbReference>
<dbReference type="FunFam" id="3.30.499.10:FF:000007">
    <property type="entry name" value="3-isopropylmalate dehydratase large subunit"/>
    <property type="match status" value="1"/>
</dbReference>
<dbReference type="Gene3D" id="3.30.499.10">
    <property type="entry name" value="Aconitase, domain 3"/>
    <property type="match status" value="2"/>
</dbReference>
<dbReference type="HAMAP" id="MF_01026">
    <property type="entry name" value="LeuC_type1"/>
    <property type="match status" value="1"/>
</dbReference>
<dbReference type="InterPro" id="IPR004430">
    <property type="entry name" value="3-IsopropMal_deHydase_lsu"/>
</dbReference>
<dbReference type="InterPro" id="IPR015931">
    <property type="entry name" value="Acnase/IPM_dHydase_lsu_aba_1/3"/>
</dbReference>
<dbReference type="InterPro" id="IPR001030">
    <property type="entry name" value="Acoase/IPM_deHydtase_lsu_aba"/>
</dbReference>
<dbReference type="InterPro" id="IPR018136">
    <property type="entry name" value="Aconitase_4Fe-4S_BS"/>
</dbReference>
<dbReference type="InterPro" id="IPR036008">
    <property type="entry name" value="Aconitase_4Fe-4S_dom"/>
</dbReference>
<dbReference type="InterPro" id="IPR050067">
    <property type="entry name" value="IPM_dehydratase_rel_enz"/>
</dbReference>
<dbReference type="InterPro" id="IPR033941">
    <property type="entry name" value="IPMI_cat"/>
</dbReference>
<dbReference type="NCBIfam" id="TIGR00170">
    <property type="entry name" value="leuC"/>
    <property type="match status" value="1"/>
</dbReference>
<dbReference type="NCBIfam" id="NF004016">
    <property type="entry name" value="PRK05478.1"/>
    <property type="match status" value="1"/>
</dbReference>
<dbReference type="NCBIfam" id="NF009116">
    <property type="entry name" value="PRK12466.1"/>
    <property type="match status" value="1"/>
</dbReference>
<dbReference type="PANTHER" id="PTHR43822:SF9">
    <property type="entry name" value="3-ISOPROPYLMALATE DEHYDRATASE"/>
    <property type="match status" value="1"/>
</dbReference>
<dbReference type="PANTHER" id="PTHR43822">
    <property type="entry name" value="HOMOACONITASE, MITOCHONDRIAL-RELATED"/>
    <property type="match status" value="1"/>
</dbReference>
<dbReference type="Pfam" id="PF00330">
    <property type="entry name" value="Aconitase"/>
    <property type="match status" value="1"/>
</dbReference>
<dbReference type="PRINTS" id="PR00415">
    <property type="entry name" value="ACONITASE"/>
</dbReference>
<dbReference type="SUPFAM" id="SSF53732">
    <property type="entry name" value="Aconitase iron-sulfur domain"/>
    <property type="match status" value="1"/>
</dbReference>
<dbReference type="PROSITE" id="PS00450">
    <property type="entry name" value="ACONITASE_1"/>
    <property type="match status" value="1"/>
</dbReference>
<dbReference type="PROSITE" id="PS01244">
    <property type="entry name" value="ACONITASE_2"/>
    <property type="match status" value="1"/>
</dbReference>
<keyword id="KW-0004">4Fe-4S</keyword>
<keyword id="KW-0028">Amino-acid biosynthesis</keyword>
<keyword id="KW-0100">Branched-chain amino acid biosynthesis</keyword>
<keyword id="KW-0408">Iron</keyword>
<keyword id="KW-0411">Iron-sulfur</keyword>
<keyword id="KW-0432">Leucine biosynthesis</keyword>
<keyword id="KW-0456">Lyase</keyword>
<keyword id="KW-0479">Metal-binding</keyword>
<keyword id="KW-1185">Reference proteome</keyword>
<organism>
    <name type="scientific">Laribacter hongkongensis (strain HLHK9)</name>
    <dbReference type="NCBI Taxonomy" id="557598"/>
    <lineage>
        <taxon>Bacteria</taxon>
        <taxon>Pseudomonadati</taxon>
        <taxon>Pseudomonadota</taxon>
        <taxon>Betaproteobacteria</taxon>
        <taxon>Neisseriales</taxon>
        <taxon>Aquaspirillaceae</taxon>
        <taxon>Laribacter</taxon>
    </lineage>
</organism>
<sequence length="472" mass="50137">MAAQTLYDKLWESHVVRTDPDGTSLLYIDRHLVHEVTSPQAFEGLKLAGRKPWRVHSIVATADHNTPTDNWDLGIAGIKDPVSRLQVETLDANVRETGALAYFPFMDRNQGIVHVVGPEQGATLPGMTVVCGDSHTSTHGAFAALAHGIGTSEVEHVMATQCLTAKKSKAMLVRVEGELQAGVTAKDIALAVIGRIGTAGGTGYAIEFAGSAIRGLSMEGRMTLCNMAIEAGARSGLVAVDQVTLDYVKGRPFAPTAEQWEAAVACWRELKSDEGAVFDAVVELDATTIAPQVTWGTSPEMVVAITDRVPDPAAEADPVKREGMQRALAYMGLTAGTPMAEIAVDKVFVGSCTNSRIEDLREAAAVVRGRRKADSVRLAMVVPGSGNVKAEAEAEGLDKIFVAAGFEWREPGCSMCLAMNADRLEPGERCASTSNRNFEGRQGQGGRTHLVSPAMAAAAAIAGHFVDIRKGY</sequence>
<proteinExistence type="inferred from homology"/>
<evidence type="ECO:0000255" key="1">
    <source>
        <dbReference type="HAMAP-Rule" id="MF_01026"/>
    </source>
</evidence>
<accession>C1DD59</accession>